<keyword id="KW-0012">Acyltransferase</keyword>
<keyword id="KW-0028">Amino-acid biosynthesis</keyword>
<keyword id="KW-0963">Cytoplasm</keyword>
<keyword id="KW-0220">Diaminopimelate biosynthesis</keyword>
<keyword id="KW-0457">Lysine biosynthesis</keyword>
<keyword id="KW-1185">Reference proteome</keyword>
<keyword id="KW-0677">Repeat</keyword>
<keyword id="KW-0808">Transferase</keyword>
<feature type="chain" id="PRO_1000047192" description="2,3,4,5-tetrahydropyridine-2,6-dicarboxylate N-succinyltransferase">
    <location>
        <begin position="1"/>
        <end position="274"/>
    </location>
</feature>
<feature type="binding site" evidence="1">
    <location>
        <position position="104"/>
    </location>
    <ligand>
        <name>substrate</name>
    </ligand>
</feature>
<feature type="binding site" evidence="1">
    <location>
        <position position="141"/>
    </location>
    <ligand>
        <name>substrate</name>
    </ligand>
</feature>
<protein>
    <recommendedName>
        <fullName evidence="1">2,3,4,5-tetrahydropyridine-2,6-dicarboxylate N-succinyltransferase</fullName>
        <ecNumber evidence="1">2.3.1.117</ecNumber>
    </recommendedName>
    <alternativeName>
        <fullName evidence="1">Tetrahydrodipicolinate N-succinyltransferase</fullName>
        <shortName evidence="1">THDP succinyltransferase</shortName>
        <shortName evidence="1">THP succinyltransferase</shortName>
        <shortName evidence="1">Tetrahydropicolinate succinylase</shortName>
    </alternativeName>
</protein>
<accession>Q32JU3</accession>
<gene>
    <name evidence="1" type="primary">dapD</name>
    <name type="ordered locus">SDY_0182</name>
</gene>
<organism>
    <name type="scientific">Shigella dysenteriae serotype 1 (strain Sd197)</name>
    <dbReference type="NCBI Taxonomy" id="300267"/>
    <lineage>
        <taxon>Bacteria</taxon>
        <taxon>Pseudomonadati</taxon>
        <taxon>Pseudomonadota</taxon>
        <taxon>Gammaproteobacteria</taxon>
        <taxon>Enterobacterales</taxon>
        <taxon>Enterobacteriaceae</taxon>
        <taxon>Shigella</taxon>
    </lineage>
</organism>
<comment type="catalytic activity">
    <reaction evidence="1">
        <text>(S)-2,3,4,5-tetrahydrodipicolinate + succinyl-CoA + H2O = (S)-2-succinylamino-6-oxoheptanedioate + CoA</text>
        <dbReference type="Rhea" id="RHEA:17325"/>
        <dbReference type="ChEBI" id="CHEBI:15377"/>
        <dbReference type="ChEBI" id="CHEBI:15685"/>
        <dbReference type="ChEBI" id="CHEBI:16845"/>
        <dbReference type="ChEBI" id="CHEBI:57287"/>
        <dbReference type="ChEBI" id="CHEBI:57292"/>
        <dbReference type="EC" id="2.3.1.117"/>
    </reaction>
</comment>
<comment type="pathway">
    <text evidence="1">Amino-acid biosynthesis; L-lysine biosynthesis via DAP pathway; LL-2,6-diaminopimelate from (S)-tetrahydrodipicolinate (succinylase route): step 1/3.</text>
</comment>
<comment type="subunit">
    <text evidence="1">Homotrimer.</text>
</comment>
<comment type="subcellular location">
    <subcellularLocation>
        <location evidence="1">Cytoplasm</location>
    </subcellularLocation>
</comment>
<comment type="similarity">
    <text evidence="1">Belongs to the transferase hexapeptide repeat family.</text>
</comment>
<sequence length="274" mass="29877">MQQLQNIIETAFERRAEITPANADTITREAVNQVIALLDSGALRVAEKIDGQWVTHQWLKKAVLLSFRINDNQVIEGAESRYFDKVPMKFANYDEARFQKEGFRVVPPAAVRQGAFIARNTVLMPSYVNIGAYVDEGTMVDTWATVGSCAQIGKNVHLSGGVGIGGVLEPLQANPTIIEDNCFIGARSEIVEGVIVEEGSVISMGVYIGQSTKIYDRETGEVHYGRVPAGSVVVSGNLPSKDGKYSLYCAVIVKKVDAKTRGKVGINELLRTID</sequence>
<reference key="1">
    <citation type="journal article" date="2005" name="Nucleic Acids Res.">
        <title>Genome dynamics and diversity of Shigella species, the etiologic agents of bacillary dysentery.</title>
        <authorList>
            <person name="Yang F."/>
            <person name="Yang J."/>
            <person name="Zhang X."/>
            <person name="Chen L."/>
            <person name="Jiang Y."/>
            <person name="Yan Y."/>
            <person name="Tang X."/>
            <person name="Wang J."/>
            <person name="Xiong Z."/>
            <person name="Dong J."/>
            <person name="Xue Y."/>
            <person name="Zhu Y."/>
            <person name="Xu X."/>
            <person name="Sun L."/>
            <person name="Chen S."/>
            <person name="Nie H."/>
            <person name="Peng J."/>
            <person name="Xu J."/>
            <person name="Wang Y."/>
            <person name="Yuan Z."/>
            <person name="Wen Y."/>
            <person name="Yao Z."/>
            <person name="Shen Y."/>
            <person name="Qiang B."/>
            <person name="Hou Y."/>
            <person name="Yu J."/>
            <person name="Jin Q."/>
        </authorList>
    </citation>
    <scope>NUCLEOTIDE SEQUENCE [LARGE SCALE GENOMIC DNA]</scope>
    <source>
        <strain>Sd197</strain>
    </source>
</reference>
<name>DAPD_SHIDS</name>
<proteinExistence type="inferred from homology"/>
<dbReference type="EC" id="2.3.1.117" evidence="1"/>
<dbReference type="EMBL" id="CP000034">
    <property type="protein sequence ID" value="ABB60414.1"/>
    <property type="molecule type" value="Genomic_DNA"/>
</dbReference>
<dbReference type="RefSeq" id="WP_001186643.1">
    <property type="nucleotide sequence ID" value="NC_007606.1"/>
</dbReference>
<dbReference type="RefSeq" id="YP_401903.1">
    <property type="nucleotide sequence ID" value="NC_007606.1"/>
</dbReference>
<dbReference type="SMR" id="Q32JU3"/>
<dbReference type="STRING" id="300267.SDY_0182"/>
<dbReference type="EnsemblBacteria" id="ABB60414">
    <property type="protein sequence ID" value="ABB60414"/>
    <property type="gene ID" value="SDY_0182"/>
</dbReference>
<dbReference type="KEGG" id="sdy:SDY_0182"/>
<dbReference type="PATRIC" id="fig|300267.13.peg.211"/>
<dbReference type="HOGENOM" id="CLU_050859_0_1_6"/>
<dbReference type="UniPathway" id="UPA00034">
    <property type="reaction ID" value="UER00019"/>
</dbReference>
<dbReference type="Proteomes" id="UP000002716">
    <property type="component" value="Chromosome"/>
</dbReference>
<dbReference type="GO" id="GO:0005737">
    <property type="term" value="C:cytoplasm"/>
    <property type="evidence" value="ECO:0007669"/>
    <property type="project" value="UniProtKB-SubCell"/>
</dbReference>
<dbReference type="GO" id="GO:0008666">
    <property type="term" value="F:2,3,4,5-tetrahydropyridine-2,6-dicarboxylate N-succinyltransferase activity"/>
    <property type="evidence" value="ECO:0007669"/>
    <property type="project" value="UniProtKB-UniRule"/>
</dbReference>
<dbReference type="GO" id="GO:0016779">
    <property type="term" value="F:nucleotidyltransferase activity"/>
    <property type="evidence" value="ECO:0007669"/>
    <property type="project" value="TreeGrafter"/>
</dbReference>
<dbReference type="GO" id="GO:0019877">
    <property type="term" value="P:diaminopimelate biosynthetic process"/>
    <property type="evidence" value="ECO:0007669"/>
    <property type="project" value="UniProtKB-UniRule"/>
</dbReference>
<dbReference type="GO" id="GO:0009089">
    <property type="term" value="P:lysine biosynthetic process via diaminopimelate"/>
    <property type="evidence" value="ECO:0007669"/>
    <property type="project" value="UniProtKB-UniRule"/>
</dbReference>
<dbReference type="CDD" id="cd03350">
    <property type="entry name" value="LbH_THP_succinylT"/>
    <property type="match status" value="1"/>
</dbReference>
<dbReference type="FunFam" id="1.10.166.10:FF:000001">
    <property type="entry name" value="2,3,4,5-tetrahydropyridine-2,6-dicarboxylate N-succinyltransferase"/>
    <property type="match status" value="1"/>
</dbReference>
<dbReference type="FunFam" id="2.160.10.10:FF:000004">
    <property type="entry name" value="2,3,4,5-tetrahydropyridine-2,6-dicarboxylate N-succinyltransferase"/>
    <property type="match status" value="1"/>
</dbReference>
<dbReference type="Gene3D" id="2.160.10.10">
    <property type="entry name" value="Hexapeptide repeat proteins"/>
    <property type="match status" value="1"/>
</dbReference>
<dbReference type="Gene3D" id="1.10.166.10">
    <property type="entry name" value="Tetrahydrodipicolinate-N-succinyltransferase, N-terminal domain"/>
    <property type="match status" value="1"/>
</dbReference>
<dbReference type="HAMAP" id="MF_00811">
    <property type="entry name" value="DapD"/>
    <property type="match status" value="1"/>
</dbReference>
<dbReference type="InterPro" id="IPR005664">
    <property type="entry name" value="DapD_Trfase_Hexpep_rpt_fam"/>
</dbReference>
<dbReference type="InterPro" id="IPR001451">
    <property type="entry name" value="Hexapep"/>
</dbReference>
<dbReference type="InterPro" id="IPR018357">
    <property type="entry name" value="Hexapep_transf_CS"/>
</dbReference>
<dbReference type="InterPro" id="IPR023180">
    <property type="entry name" value="THP_succinylTrfase_dom1"/>
</dbReference>
<dbReference type="InterPro" id="IPR037133">
    <property type="entry name" value="THP_succinylTrfase_N_sf"/>
</dbReference>
<dbReference type="InterPro" id="IPR011004">
    <property type="entry name" value="Trimer_LpxA-like_sf"/>
</dbReference>
<dbReference type="NCBIfam" id="TIGR00965">
    <property type="entry name" value="dapD"/>
    <property type="match status" value="1"/>
</dbReference>
<dbReference type="NCBIfam" id="NF008808">
    <property type="entry name" value="PRK11830.1"/>
    <property type="match status" value="1"/>
</dbReference>
<dbReference type="PANTHER" id="PTHR19136:SF52">
    <property type="entry name" value="2,3,4,5-TETRAHYDROPYRIDINE-2,6-DICARBOXYLATE N-SUCCINYLTRANSFERASE"/>
    <property type="match status" value="1"/>
</dbReference>
<dbReference type="PANTHER" id="PTHR19136">
    <property type="entry name" value="MOLYBDENUM COFACTOR GUANYLYLTRANSFERASE"/>
    <property type="match status" value="1"/>
</dbReference>
<dbReference type="Pfam" id="PF14602">
    <property type="entry name" value="Hexapep_2"/>
    <property type="match status" value="1"/>
</dbReference>
<dbReference type="Pfam" id="PF14805">
    <property type="entry name" value="THDPS_N_2"/>
    <property type="match status" value="1"/>
</dbReference>
<dbReference type="SUPFAM" id="SSF51161">
    <property type="entry name" value="Trimeric LpxA-like enzymes"/>
    <property type="match status" value="1"/>
</dbReference>
<dbReference type="PROSITE" id="PS00101">
    <property type="entry name" value="HEXAPEP_TRANSFERASES"/>
    <property type="match status" value="1"/>
</dbReference>
<evidence type="ECO:0000255" key="1">
    <source>
        <dbReference type="HAMAP-Rule" id="MF_00811"/>
    </source>
</evidence>